<feature type="chain" id="PRO_1000145995" description="tRNA N6-adenosine threonylcarbamoyltransferase">
    <location>
        <begin position="1"/>
        <end position="347"/>
    </location>
</feature>
<feature type="binding site" evidence="1">
    <location>
        <position position="115"/>
    </location>
    <ligand>
        <name>Fe cation</name>
        <dbReference type="ChEBI" id="CHEBI:24875"/>
    </ligand>
</feature>
<feature type="binding site" evidence="1">
    <location>
        <position position="119"/>
    </location>
    <ligand>
        <name>Fe cation</name>
        <dbReference type="ChEBI" id="CHEBI:24875"/>
    </ligand>
</feature>
<feature type="binding site" evidence="1">
    <location>
        <begin position="137"/>
        <end position="141"/>
    </location>
    <ligand>
        <name>substrate</name>
    </ligand>
</feature>
<feature type="binding site" evidence="1">
    <location>
        <position position="170"/>
    </location>
    <ligand>
        <name>substrate</name>
    </ligand>
</feature>
<feature type="binding site" evidence="1">
    <location>
        <position position="183"/>
    </location>
    <ligand>
        <name>substrate</name>
    </ligand>
</feature>
<feature type="binding site" evidence="1">
    <location>
        <position position="281"/>
    </location>
    <ligand>
        <name>substrate</name>
    </ligand>
</feature>
<feature type="binding site" evidence="1">
    <location>
        <position position="309"/>
    </location>
    <ligand>
        <name>Fe cation</name>
        <dbReference type="ChEBI" id="CHEBI:24875"/>
    </ligand>
</feature>
<comment type="function">
    <text evidence="1">Required for the formation of a threonylcarbamoyl group on adenosine at position 37 (t(6)A37) in tRNAs that read codons beginning with adenine. Is involved in the transfer of the threonylcarbamoyl moiety of threonylcarbamoyl-AMP (TC-AMP) to the N6 group of A37, together with TsaE and TsaB. TsaD likely plays a direct catalytic role in this reaction.</text>
</comment>
<comment type="catalytic activity">
    <reaction evidence="1">
        <text>L-threonylcarbamoyladenylate + adenosine(37) in tRNA = N(6)-L-threonylcarbamoyladenosine(37) in tRNA + AMP + H(+)</text>
        <dbReference type="Rhea" id="RHEA:37059"/>
        <dbReference type="Rhea" id="RHEA-COMP:10162"/>
        <dbReference type="Rhea" id="RHEA-COMP:10163"/>
        <dbReference type="ChEBI" id="CHEBI:15378"/>
        <dbReference type="ChEBI" id="CHEBI:73682"/>
        <dbReference type="ChEBI" id="CHEBI:74411"/>
        <dbReference type="ChEBI" id="CHEBI:74418"/>
        <dbReference type="ChEBI" id="CHEBI:456215"/>
        <dbReference type="EC" id="2.3.1.234"/>
    </reaction>
</comment>
<comment type="cofactor">
    <cofactor evidence="1">
        <name>Fe(2+)</name>
        <dbReference type="ChEBI" id="CHEBI:29033"/>
    </cofactor>
    <text evidence="1">Binds 1 Fe(2+) ion per subunit.</text>
</comment>
<comment type="subcellular location">
    <subcellularLocation>
        <location evidence="1">Cytoplasm</location>
    </subcellularLocation>
</comment>
<comment type="similarity">
    <text evidence="1">Belongs to the KAE1 / TsaD family.</text>
</comment>
<sequence length="347" mass="35890">MKILGIETTCDETAAAVVTVGEEERGRILSNEVLSQIAEHAAYGGVVPEIAARAHVEVLDRLIARALQRAGTTLPEIDGIAVAAGPGLIGGVLIGLVTAKTLALVARKPLLAVNHLEAHALTPRLTDGLAFPYLLLLASGGHTQLVAVKGVGDYVRLGTTIDDAIGEAFDKVAKLLGLGYPGGPEVERQAQNGNPERFALPRPMLGRRQADFSLSGLKTALRIEAERLEPLASQDVADLCASFQAAVVDVVVDRVRVALRAFAGVAGHPTALVAAGGVAANGAIRRALAAQAGEVGLSFVAPPLPLCGDNGAMIAWAGLERLRLGLVDDLTVPARARWPFAEAAPAA</sequence>
<protein>
    <recommendedName>
        <fullName evidence="1">tRNA N6-adenosine threonylcarbamoyltransferase</fullName>
        <ecNumber evidence="1">2.3.1.234</ecNumber>
    </recommendedName>
    <alternativeName>
        <fullName evidence="1">N6-L-threonylcarbamoyladenine synthase</fullName>
        <shortName evidence="1">t(6)A synthase</shortName>
    </alternativeName>
    <alternativeName>
        <fullName evidence="1">t(6)A37 threonylcarbamoyladenosine biosynthesis protein TsaD</fullName>
    </alternativeName>
    <alternativeName>
        <fullName evidence="1">tRNA threonylcarbamoyladenosine biosynthesis protein TsaD</fullName>
    </alternativeName>
</protein>
<name>TSAD_METPB</name>
<keyword id="KW-0012">Acyltransferase</keyword>
<keyword id="KW-0963">Cytoplasm</keyword>
<keyword id="KW-0408">Iron</keyword>
<keyword id="KW-0479">Metal-binding</keyword>
<keyword id="KW-0808">Transferase</keyword>
<keyword id="KW-0819">tRNA processing</keyword>
<organism>
    <name type="scientific">Methylorubrum populi (strain ATCC BAA-705 / NCIMB 13946 / BJ001)</name>
    <name type="common">Methylobacterium populi</name>
    <dbReference type="NCBI Taxonomy" id="441620"/>
    <lineage>
        <taxon>Bacteria</taxon>
        <taxon>Pseudomonadati</taxon>
        <taxon>Pseudomonadota</taxon>
        <taxon>Alphaproteobacteria</taxon>
        <taxon>Hyphomicrobiales</taxon>
        <taxon>Methylobacteriaceae</taxon>
        <taxon>Methylorubrum</taxon>
    </lineage>
</organism>
<dbReference type="EC" id="2.3.1.234" evidence="1"/>
<dbReference type="EMBL" id="CP001029">
    <property type="protein sequence ID" value="ACB78883.1"/>
    <property type="molecule type" value="Genomic_DNA"/>
</dbReference>
<dbReference type="RefSeq" id="WP_012452639.1">
    <property type="nucleotide sequence ID" value="NC_010725.1"/>
</dbReference>
<dbReference type="SMR" id="B1Z700"/>
<dbReference type="STRING" id="441620.Mpop_0705"/>
<dbReference type="KEGG" id="mpo:Mpop_0705"/>
<dbReference type="eggNOG" id="COG0533">
    <property type="taxonomic scope" value="Bacteria"/>
</dbReference>
<dbReference type="HOGENOM" id="CLU_023208_0_2_5"/>
<dbReference type="OrthoDB" id="9806197at2"/>
<dbReference type="Proteomes" id="UP000007136">
    <property type="component" value="Chromosome"/>
</dbReference>
<dbReference type="GO" id="GO:0005737">
    <property type="term" value="C:cytoplasm"/>
    <property type="evidence" value="ECO:0007669"/>
    <property type="project" value="UniProtKB-SubCell"/>
</dbReference>
<dbReference type="GO" id="GO:0005506">
    <property type="term" value="F:iron ion binding"/>
    <property type="evidence" value="ECO:0007669"/>
    <property type="project" value="UniProtKB-UniRule"/>
</dbReference>
<dbReference type="GO" id="GO:0061711">
    <property type="term" value="F:N(6)-L-threonylcarbamoyladenine synthase activity"/>
    <property type="evidence" value="ECO:0007669"/>
    <property type="project" value="UniProtKB-EC"/>
</dbReference>
<dbReference type="GO" id="GO:0002949">
    <property type="term" value="P:tRNA threonylcarbamoyladenosine modification"/>
    <property type="evidence" value="ECO:0007669"/>
    <property type="project" value="UniProtKB-UniRule"/>
</dbReference>
<dbReference type="FunFam" id="3.30.420.40:FF:000040">
    <property type="entry name" value="tRNA N6-adenosine threonylcarbamoyltransferase"/>
    <property type="match status" value="1"/>
</dbReference>
<dbReference type="Gene3D" id="3.30.420.40">
    <property type="match status" value="2"/>
</dbReference>
<dbReference type="HAMAP" id="MF_01445">
    <property type="entry name" value="TsaD"/>
    <property type="match status" value="1"/>
</dbReference>
<dbReference type="InterPro" id="IPR043129">
    <property type="entry name" value="ATPase_NBD"/>
</dbReference>
<dbReference type="InterPro" id="IPR000905">
    <property type="entry name" value="Gcp-like_dom"/>
</dbReference>
<dbReference type="InterPro" id="IPR017861">
    <property type="entry name" value="KAE1/TsaD"/>
</dbReference>
<dbReference type="InterPro" id="IPR022450">
    <property type="entry name" value="TsaD"/>
</dbReference>
<dbReference type="NCBIfam" id="TIGR00329">
    <property type="entry name" value="gcp_kae1"/>
    <property type="match status" value="1"/>
</dbReference>
<dbReference type="NCBIfam" id="TIGR03723">
    <property type="entry name" value="T6A_TsaD_YgjD"/>
    <property type="match status" value="1"/>
</dbReference>
<dbReference type="PANTHER" id="PTHR11735">
    <property type="entry name" value="TRNA N6-ADENOSINE THREONYLCARBAMOYLTRANSFERASE"/>
    <property type="match status" value="1"/>
</dbReference>
<dbReference type="PANTHER" id="PTHR11735:SF6">
    <property type="entry name" value="TRNA N6-ADENOSINE THREONYLCARBAMOYLTRANSFERASE, MITOCHONDRIAL"/>
    <property type="match status" value="1"/>
</dbReference>
<dbReference type="Pfam" id="PF00814">
    <property type="entry name" value="TsaD"/>
    <property type="match status" value="1"/>
</dbReference>
<dbReference type="PRINTS" id="PR00789">
    <property type="entry name" value="OSIALOPTASE"/>
</dbReference>
<dbReference type="SUPFAM" id="SSF53067">
    <property type="entry name" value="Actin-like ATPase domain"/>
    <property type="match status" value="2"/>
</dbReference>
<reference key="1">
    <citation type="submission" date="2008-04" db="EMBL/GenBank/DDBJ databases">
        <title>Complete sequence of chromosome of Methylobacterium populi BJ001.</title>
        <authorList>
            <consortium name="US DOE Joint Genome Institute"/>
            <person name="Copeland A."/>
            <person name="Lucas S."/>
            <person name="Lapidus A."/>
            <person name="Glavina del Rio T."/>
            <person name="Dalin E."/>
            <person name="Tice H."/>
            <person name="Bruce D."/>
            <person name="Goodwin L."/>
            <person name="Pitluck S."/>
            <person name="Chertkov O."/>
            <person name="Brettin T."/>
            <person name="Detter J.C."/>
            <person name="Han C."/>
            <person name="Kuske C.R."/>
            <person name="Schmutz J."/>
            <person name="Larimer F."/>
            <person name="Land M."/>
            <person name="Hauser L."/>
            <person name="Kyrpides N."/>
            <person name="Mikhailova N."/>
            <person name="Marx C."/>
            <person name="Richardson P."/>
        </authorList>
    </citation>
    <scope>NUCLEOTIDE SEQUENCE [LARGE SCALE GENOMIC DNA]</scope>
    <source>
        <strain>ATCC BAA-705 / NCIMB 13946 / BJ001</strain>
    </source>
</reference>
<gene>
    <name evidence="1" type="primary">tsaD</name>
    <name type="synonym">gcp</name>
    <name type="ordered locus">Mpop_0705</name>
</gene>
<evidence type="ECO:0000255" key="1">
    <source>
        <dbReference type="HAMAP-Rule" id="MF_01445"/>
    </source>
</evidence>
<proteinExistence type="inferred from homology"/>
<accession>B1Z700</accession>